<organism>
    <name type="scientific">Conus litteratus</name>
    <name type="common">Lettered cone</name>
    <dbReference type="NCBI Taxonomy" id="89445"/>
    <lineage>
        <taxon>Eukaryota</taxon>
        <taxon>Metazoa</taxon>
        <taxon>Spiralia</taxon>
        <taxon>Lophotrochozoa</taxon>
        <taxon>Mollusca</taxon>
        <taxon>Gastropoda</taxon>
        <taxon>Caenogastropoda</taxon>
        <taxon>Neogastropoda</taxon>
        <taxon>Conoidea</taxon>
        <taxon>Conidae</taxon>
        <taxon>Conus</taxon>
        <taxon>Elisaconus</taxon>
    </lineage>
</organism>
<name>O161_CONLT</name>
<accession>Q2I2R4</accession>
<comment type="subcellular location">
    <subcellularLocation>
        <location evidence="1">Secreted</location>
    </subcellularLocation>
</comment>
<comment type="tissue specificity">
    <text>Expressed by the venom duct.</text>
</comment>
<comment type="domain">
    <text evidence="1">The presence of a 'disulfide through disulfide knot' structurally defines this protein as a knottin.</text>
</comment>
<comment type="domain">
    <text>The cysteine framework is VI/VII (C-C-CC-C-C).</text>
</comment>
<comment type="similarity">
    <text evidence="3">Belongs to the conotoxin O1 superfamily.</text>
</comment>
<keyword id="KW-1015">Disulfide bond</keyword>
<keyword id="KW-0960">Knottin</keyword>
<keyword id="KW-0964">Secreted</keyword>
<keyword id="KW-0732">Signal</keyword>
<keyword id="KW-0800">Toxin</keyword>
<sequence>MKLTCVLIIAVLFLMDNQLITADYPRDEQVYRAVRLRDAMQKSKGSGSCAYISEPCDILPCCPGLKCNEDFVPICL</sequence>
<evidence type="ECO:0000250" key="1"/>
<evidence type="ECO:0000255" key="2"/>
<evidence type="ECO:0000305" key="3"/>
<reference key="1">
    <citation type="journal article" date="2006" name="Genomics">
        <title>Diversity and evolution of conotoxins based on gene expression profiling of Conus litteratus.</title>
        <authorList>
            <person name="Pi C."/>
            <person name="Liu J."/>
            <person name="Peng C."/>
            <person name="Liu Y."/>
            <person name="Jiang X."/>
            <person name="Zhao Y."/>
            <person name="Tang S."/>
            <person name="Wang L."/>
            <person name="Dong M."/>
            <person name="Chen S."/>
            <person name="Xu A."/>
        </authorList>
    </citation>
    <scope>NUCLEOTIDE SEQUENCE [MRNA]</scope>
    <source>
        <tissue>Venom duct</tissue>
    </source>
</reference>
<dbReference type="EMBL" id="DQ345368">
    <property type="protein sequence ID" value="ABC74976.1"/>
    <property type="molecule type" value="mRNA"/>
</dbReference>
<dbReference type="SMR" id="Q2I2R4"/>
<dbReference type="ConoServer" id="1154">
    <property type="toxin name" value="LtVIA precursor"/>
</dbReference>
<dbReference type="GO" id="GO:0005576">
    <property type="term" value="C:extracellular region"/>
    <property type="evidence" value="ECO:0007669"/>
    <property type="project" value="UniProtKB-SubCell"/>
</dbReference>
<dbReference type="GO" id="GO:0008200">
    <property type="term" value="F:ion channel inhibitor activity"/>
    <property type="evidence" value="ECO:0007669"/>
    <property type="project" value="InterPro"/>
</dbReference>
<dbReference type="GO" id="GO:0090729">
    <property type="term" value="F:toxin activity"/>
    <property type="evidence" value="ECO:0007669"/>
    <property type="project" value="UniProtKB-KW"/>
</dbReference>
<dbReference type="InterPro" id="IPR004214">
    <property type="entry name" value="Conotoxin"/>
</dbReference>
<dbReference type="Pfam" id="PF02950">
    <property type="entry name" value="Conotoxin"/>
    <property type="match status" value="1"/>
</dbReference>
<protein>
    <recommendedName>
        <fullName>Conotoxin Lt6.1</fullName>
    </recommendedName>
    <alternativeName>
        <fullName>Lt6a</fullName>
    </alternativeName>
</protein>
<proteinExistence type="evidence at transcript level"/>
<feature type="signal peptide" evidence="2">
    <location>
        <begin position="1"/>
        <end position="22"/>
    </location>
</feature>
<feature type="propeptide" id="PRO_0000315492" evidence="1">
    <location>
        <begin position="23"/>
        <end position="48"/>
    </location>
</feature>
<feature type="peptide" id="PRO_0000315493" description="Conotoxin Lt6.1">
    <location>
        <begin position="49"/>
        <end position="76"/>
    </location>
</feature>
<feature type="disulfide bond" evidence="1">
    <location>
        <begin position="49"/>
        <end position="62"/>
    </location>
</feature>
<feature type="disulfide bond" evidence="1">
    <location>
        <begin position="56"/>
        <end position="67"/>
    </location>
</feature>
<feature type="disulfide bond" evidence="1">
    <location>
        <begin position="61"/>
        <end position="75"/>
    </location>
</feature>